<keyword id="KW-0903">Direct protein sequencing</keyword>
<keyword id="KW-1015">Disulfide bond</keyword>
<keyword id="KW-0372">Hormone</keyword>
<keyword id="KW-0964">Secreted</keyword>
<keyword id="KW-0732">Signal</keyword>
<comment type="subcellular location">
    <subcellularLocation>
        <location>Secreted</location>
    </subcellularLocation>
</comment>
<comment type="similarity">
    <text evidence="2">Belongs to the somatotropin/prolactin family.</text>
</comment>
<proteinExistence type="evidence at protein level"/>
<dbReference type="EMBL" id="D00249">
    <property type="protein sequence ID" value="BAA00180.1"/>
    <property type="molecule type" value="mRNA"/>
</dbReference>
<dbReference type="PIR" id="I51084">
    <property type="entry name" value="I51084"/>
</dbReference>
<dbReference type="SMR" id="P09584"/>
<dbReference type="OrthoDB" id="9946219at2759"/>
<dbReference type="GO" id="GO:0005615">
    <property type="term" value="C:extracellular space"/>
    <property type="evidence" value="ECO:0007669"/>
    <property type="project" value="TreeGrafter"/>
</dbReference>
<dbReference type="GO" id="GO:0005179">
    <property type="term" value="F:hormone activity"/>
    <property type="evidence" value="ECO:0007669"/>
    <property type="project" value="UniProtKB-KW"/>
</dbReference>
<dbReference type="GO" id="GO:0005148">
    <property type="term" value="F:prolactin receptor binding"/>
    <property type="evidence" value="ECO:0000250"/>
    <property type="project" value="AgBase"/>
</dbReference>
<dbReference type="GO" id="GO:0016176">
    <property type="term" value="F:superoxide-generating NADPH oxidase activator activity"/>
    <property type="evidence" value="ECO:0000250"/>
    <property type="project" value="AgBase"/>
</dbReference>
<dbReference type="GO" id="GO:0007259">
    <property type="term" value="P:cell surface receptor signaling pathway via JAK-STAT"/>
    <property type="evidence" value="ECO:0000250"/>
    <property type="project" value="AgBase"/>
</dbReference>
<dbReference type="GO" id="GO:0010629">
    <property type="term" value="P:negative regulation of gene expression"/>
    <property type="evidence" value="ECO:0000315"/>
    <property type="project" value="AgBase"/>
</dbReference>
<dbReference type="GO" id="GO:0010628">
    <property type="term" value="P:positive regulation of gene expression"/>
    <property type="evidence" value="ECO:0000250"/>
    <property type="project" value="AgBase"/>
</dbReference>
<dbReference type="GO" id="GO:0070665">
    <property type="term" value="P:positive regulation of leukocyte proliferation"/>
    <property type="evidence" value="ECO:0000250"/>
    <property type="project" value="AgBase"/>
</dbReference>
<dbReference type="GO" id="GO:0050766">
    <property type="term" value="P:positive regulation of phagocytosis"/>
    <property type="evidence" value="ECO:0000315"/>
    <property type="project" value="AgBase"/>
</dbReference>
<dbReference type="GO" id="GO:1903428">
    <property type="term" value="P:positive regulation of reactive oxygen species biosynthetic process"/>
    <property type="evidence" value="ECO:0000250"/>
    <property type="project" value="AgBase"/>
</dbReference>
<dbReference type="GO" id="GO:0046427">
    <property type="term" value="P:positive regulation of receptor signaling pathway via JAK-STAT"/>
    <property type="evidence" value="ECO:0007669"/>
    <property type="project" value="TreeGrafter"/>
</dbReference>
<dbReference type="GO" id="GO:0060267">
    <property type="term" value="P:positive regulation of respiratory burst"/>
    <property type="evidence" value="ECO:0000250"/>
    <property type="project" value="AgBase"/>
</dbReference>
<dbReference type="GO" id="GO:0032930">
    <property type="term" value="P:positive regulation of superoxide anion generation"/>
    <property type="evidence" value="ECO:0000315"/>
    <property type="project" value="AgBase"/>
</dbReference>
<dbReference type="GO" id="GO:0002637">
    <property type="term" value="P:regulation of immunoglobulin production"/>
    <property type="evidence" value="ECO:0000315"/>
    <property type="project" value="AgBase"/>
</dbReference>
<dbReference type="GO" id="GO:0031667">
    <property type="term" value="P:response to nutrient levels"/>
    <property type="evidence" value="ECO:0007669"/>
    <property type="project" value="TreeGrafter"/>
</dbReference>
<dbReference type="FunFam" id="1.20.1250.10:FF:000037">
    <property type="entry name" value="Prolactin"/>
    <property type="match status" value="1"/>
</dbReference>
<dbReference type="Gene3D" id="1.20.1250.10">
    <property type="match status" value="1"/>
</dbReference>
<dbReference type="InterPro" id="IPR009079">
    <property type="entry name" value="4_helix_cytokine-like_core"/>
</dbReference>
<dbReference type="InterPro" id="IPR001400">
    <property type="entry name" value="Somatotropin/Prolactin"/>
</dbReference>
<dbReference type="InterPro" id="IPR018116">
    <property type="entry name" value="Somatotropin_CS"/>
</dbReference>
<dbReference type="PANTHER" id="PTHR11417:SF5">
    <property type="entry name" value="PROLACTIN"/>
    <property type="match status" value="1"/>
</dbReference>
<dbReference type="PANTHER" id="PTHR11417">
    <property type="entry name" value="SOMATOTROPIN,PROLACTIN"/>
    <property type="match status" value="1"/>
</dbReference>
<dbReference type="Pfam" id="PF00103">
    <property type="entry name" value="Hormone_1"/>
    <property type="match status" value="1"/>
</dbReference>
<dbReference type="PRINTS" id="PR00836">
    <property type="entry name" value="SOMATOTROPIN"/>
</dbReference>
<dbReference type="SUPFAM" id="SSF47266">
    <property type="entry name" value="4-helical cytokines"/>
    <property type="match status" value="1"/>
</dbReference>
<dbReference type="PROSITE" id="PS00266">
    <property type="entry name" value="SOMATOTROPIN_1"/>
    <property type="match status" value="1"/>
</dbReference>
<dbReference type="PROSITE" id="PS00338">
    <property type="entry name" value="SOMATOTROPIN_2"/>
    <property type="match status" value="1"/>
</dbReference>
<gene>
    <name type="primary">prl2</name>
</gene>
<feature type="signal peptide" evidence="1">
    <location>
        <begin position="1"/>
        <end position="23"/>
    </location>
</feature>
<feature type="chain" id="PRO_0000032940" description="Prolactin-2">
    <location>
        <begin position="24"/>
        <end position="210"/>
    </location>
</feature>
<feature type="disulfide bond" evidence="1">
    <location>
        <begin position="69"/>
        <end position="183"/>
    </location>
</feature>
<feature type="disulfide bond" evidence="1">
    <location>
        <begin position="200"/>
        <end position="210"/>
    </location>
</feature>
<feature type="sequence conflict" description="In Ref. 2; AA sequence." evidence="2" ref="2">
    <original>RV</original>
    <variation>KR</variation>
    <location>
        <begin position="85"/>
        <end position="86"/>
    </location>
</feature>
<organism>
    <name type="scientific">Oncorhynchus keta</name>
    <name type="common">Chum salmon</name>
    <name type="synonym">Salmo keta</name>
    <dbReference type="NCBI Taxonomy" id="8018"/>
    <lineage>
        <taxon>Eukaryota</taxon>
        <taxon>Metazoa</taxon>
        <taxon>Chordata</taxon>
        <taxon>Craniata</taxon>
        <taxon>Vertebrata</taxon>
        <taxon>Euteleostomi</taxon>
        <taxon>Actinopterygii</taxon>
        <taxon>Neopterygii</taxon>
        <taxon>Teleostei</taxon>
        <taxon>Protacanthopterygii</taxon>
        <taxon>Salmoniformes</taxon>
        <taxon>Salmonidae</taxon>
        <taxon>Salmoninae</taxon>
        <taxon>Oncorhynchus</taxon>
    </lineage>
</organism>
<protein>
    <recommendedName>
        <fullName>Prolactin-2</fullName>
    </recommendedName>
    <alternativeName>
        <fullName>Prolactin II</fullName>
        <shortName>PRL-II</shortName>
    </alternativeName>
</protein>
<evidence type="ECO:0000269" key="1">
    <source>
    </source>
</evidence>
<evidence type="ECO:0000305" key="2"/>
<name>PRL2_ONCKE</name>
<accession>P09584</accession>
<sequence length="210" mass="23431">MARRSQGTKLHLAVLCLVVSCHAIGLSDLMERASQRSDKLHSLSTSLNKDLDSHFPPMGRVMMPRPSMCHTSSLQIPKDKEQALRVSENELISLARSLLLAWNDPLLLLSSEAPTLPHPSNGDISSKIRELQDYSKSLGDGLDILVNKMGPSSQYISSIPFKGGDLGNDKTSRLINFHFLMSCFRRDSHKIDSFLKVLRCRATKMRPETC</sequence>
<reference key="1">
    <citation type="journal article" date="1988" name="Agric. Biol. Chem.">
        <title>Cloning and expression of cDNA for salmon prolactin in Escherichia coli.</title>
        <authorList>
            <person name="Kuwana Y."/>
            <person name="Kuga T."/>
            <person name="Sekine S."/>
            <person name="Sato M."/>
            <person name="Kawauchi H."/>
            <person name="Itoh S."/>
        </authorList>
    </citation>
    <scope>NUCLEOTIDE SEQUENCE [MRNA]</scope>
    <source>
        <tissue>Pituitary</tissue>
    </source>
</reference>
<reference key="2">
    <citation type="journal article" date="1986" name="Arch. Biochem. Biophys.">
        <title>Primary structure of chum salmon prolactins: occurrence of highly conserved regions.</title>
        <authorList>
            <person name="Yasuda A."/>
            <person name="Itoh H."/>
            <person name="Kawauchi H."/>
        </authorList>
    </citation>
    <scope>PROTEIN SEQUENCE OF 24-210</scope>
    <scope>DISULFIDE BONDS</scope>
    <source>
        <tissue>Pituitary</tissue>
    </source>
</reference>